<evidence type="ECO:0000255" key="1">
    <source>
        <dbReference type="HAMAP-Rule" id="MF_01813"/>
    </source>
</evidence>
<evidence type="ECO:0000305" key="2"/>
<feature type="chain" id="PRO_0000193255" description="Ubiquinone/menaquinone biosynthesis C-methyltransferase UbiE">
    <location>
        <begin position="1"/>
        <end position="253"/>
    </location>
</feature>
<feature type="binding site" evidence="1">
    <location>
        <position position="76"/>
    </location>
    <ligand>
        <name>S-adenosyl-L-methionine</name>
        <dbReference type="ChEBI" id="CHEBI:59789"/>
    </ligand>
</feature>
<feature type="binding site" evidence="1">
    <location>
        <position position="97"/>
    </location>
    <ligand>
        <name>S-adenosyl-L-methionine</name>
        <dbReference type="ChEBI" id="CHEBI:59789"/>
    </ligand>
</feature>
<feature type="binding site" evidence="1">
    <location>
        <begin position="125"/>
        <end position="126"/>
    </location>
    <ligand>
        <name>S-adenosyl-L-methionine</name>
        <dbReference type="ChEBI" id="CHEBI:59789"/>
    </ligand>
</feature>
<feature type="sequence conflict" description="In Ref. 2; AAF03914." evidence="2" ref="2">
    <original>A</original>
    <variation>G</variation>
    <location>
        <position position="204"/>
    </location>
</feature>
<feature type="sequence conflict" description="In Ref. 2; AAF03914." evidence="2" ref="2">
    <original>A</original>
    <variation>C</variation>
    <location>
        <position position="233"/>
    </location>
</feature>
<accession>Q89WD0</accession>
<accession>O52595</accession>
<sequence>MDRPGETTHFGFRDVPLGDKQTLVNDVFHSVASRYDLMNDLMSGGLHRVWKDIMINALDPPRGDRPFALLDVAGGTGDISFRAAKAAGPGFHATVCDINSDMLAVGRERAAKRHLETQVDFVEGNAEALAFADRSFDAYTIAFGIRNVPQIDLALREAYRVLRPGSRFLCLEFSTVEMPGLDKLYDLFSFKVIPPLGRMITGDAESYQYLVESIRKFPKPNAFADMIRDAGFARVNWQTLSGGIVALHSGWRL</sequence>
<organism>
    <name type="scientific">Bradyrhizobium diazoefficiens (strain JCM 10833 / BCRC 13528 / IAM 13628 / NBRC 14792 / USDA 110)</name>
    <dbReference type="NCBI Taxonomy" id="224911"/>
    <lineage>
        <taxon>Bacteria</taxon>
        <taxon>Pseudomonadati</taxon>
        <taxon>Pseudomonadota</taxon>
        <taxon>Alphaproteobacteria</taxon>
        <taxon>Hyphomicrobiales</taxon>
        <taxon>Nitrobacteraceae</taxon>
        <taxon>Bradyrhizobium</taxon>
    </lineage>
</organism>
<keyword id="KW-0474">Menaquinone biosynthesis</keyword>
<keyword id="KW-0489">Methyltransferase</keyword>
<keyword id="KW-1185">Reference proteome</keyword>
<keyword id="KW-0949">S-adenosyl-L-methionine</keyword>
<keyword id="KW-0808">Transferase</keyword>
<keyword id="KW-0831">Ubiquinone biosynthesis</keyword>
<proteinExistence type="inferred from homology"/>
<comment type="function">
    <text evidence="1">Methyltransferase required for the conversion of demethylmenaquinol (DMKH2) to menaquinol (MKH2) and the conversion of 2-polyprenyl-6-methoxy-1,4-benzoquinol (DDMQH2) to 2-polyprenyl-3-methyl-6-methoxy-1,4-benzoquinol (DMQH2).</text>
</comment>
<comment type="catalytic activity">
    <reaction evidence="1">
        <text>a 2-demethylmenaquinol + S-adenosyl-L-methionine = a menaquinol + S-adenosyl-L-homocysteine + H(+)</text>
        <dbReference type="Rhea" id="RHEA:42640"/>
        <dbReference type="Rhea" id="RHEA-COMP:9539"/>
        <dbReference type="Rhea" id="RHEA-COMP:9563"/>
        <dbReference type="ChEBI" id="CHEBI:15378"/>
        <dbReference type="ChEBI" id="CHEBI:18151"/>
        <dbReference type="ChEBI" id="CHEBI:55437"/>
        <dbReference type="ChEBI" id="CHEBI:57856"/>
        <dbReference type="ChEBI" id="CHEBI:59789"/>
        <dbReference type="EC" id="2.1.1.163"/>
    </reaction>
</comment>
<comment type="catalytic activity">
    <reaction evidence="1">
        <text>a 2-methoxy-6-(all-trans-polyprenyl)benzene-1,4-diol + S-adenosyl-L-methionine = a 5-methoxy-2-methyl-3-(all-trans-polyprenyl)benzene-1,4-diol + S-adenosyl-L-homocysteine + H(+)</text>
        <dbReference type="Rhea" id="RHEA:28286"/>
        <dbReference type="Rhea" id="RHEA-COMP:10858"/>
        <dbReference type="Rhea" id="RHEA-COMP:10859"/>
        <dbReference type="ChEBI" id="CHEBI:15378"/>
        <dbReference type="ChEBI" id="CHEBI:57856"/>
        <dbReference type="ChEBI" id="CHEBI:59789"/>
        <dbReference type="ChEBI" id="CHEBI:84166"/>
        <dbReference type="ChEBI" id="CHEBI:84167"/>
        <dbReference type="EC" id="2.1.1.201"/>
    </reaction>
</comment>
<comment type="pathway">
    <text evidence="1">Quinol/quinone metabolism; menaquinone biosynthesis; menaquinol from 1,4-dihydroxy-2-naphthoate: step 2/2.</text>
</comment>
<comment type="pathway">
    <text evidence="1">Cofactor biosynthesis; ubiquinone biosynthesis.</text>
</comment>
<comment type="similarity">
    <text evidence="1">Belongs to the class I-like SAM-binding methyltransferase superfamily. MenG/UbiE family.</text>
</comment>
<comment type="sequence caution" evidence="2">
    <conflict type="erroneous termination">
        <sequence resource="EMBL-CDS" id="AAF03914"/>
    </conflict>
    <text>Extended C-terminus.</text>
</comment>
<comment type="sequence caution" evidence="2">
    <conflict type="frameshift">
        <sequence resource="EMBL-CDS" id="AAF03914"/>
    </conflict>
</comment>
<dbReference type="EC" id="2.1.1.163" evidence="1"/>
<dbReference type="EC" id="2.1.1.201" evidence="1"/>
<dbReference type="EMBL" id="BA000040">
    <property type="protein sequence ID" value="BAC46026.1"/>
    <property type="molecule type" value="Genomic_DNA"/>
</dbReference>
<dbReference type="EMBL" id="AF042096">
    <property type="protein sequence ID" value="AAF03914.1"/>
    <property type="status" value="ALT_SEQ"/>
    <property type="molecule type" value="Genomic_DNA"/>
</dbReference>
<dbReference type="RefSeq" id="NP_767401.1">
    <property type="nucleotide sequence ID" value="NC_004463.1"/>
</dbReference>
<dbReference type="RefSeq" id="WP_011083584.1">
    <property type="nucleotide sequence ID" value="NC_004463.1"/>
</dbReference>
<dbReference type="SMR" id="Q89WD0"/>
<dbReference type="FunCoup" id="Q89WD0">
    <property type="interactions" value="586"/>
</dbReference>
<dbReference type="STRING" id="224911.AAV28_00655"/>
<dbReference type="EnsemblBacteria" id="BAC46026">
    <property type="protein sequence ID" value="BAC46026"/>
    <property type="gene ID" value="BAC46026"/>
</dbReference>
<dbReference type="GeneID" id="46488037"/>
<dbReference type="KEGG" id="bja:bll0761"/>
<dbReference type="PATRIC" id="fig|224911.44.peg.135"/>
<dbReference type="eggNOG" id="COG2226">
    <property type="taxonomic scope" value="Bacteria"/>
</dbReference>
<dbReference type="HOGENOM" id="CLU_037990_0_1_5"/>
<dbReference type="InParanoid" id="Q89WD0"/>
<dbReference type="OrthoDB" id="9808140at2"/>
<dbReference type="PhylomeDB" id="Q89WD0"/>
<dbReference type="UniPathway" id="UPA00079">
    <property type="reaction ID" value="UER00169"/>
</dbReference>
<dbReference type="UniPathway" id="UPA00232"/>
<dbReference type="Proteomes" id="UP000002526">
    <property type="component" value="Chromosome"/>
</dbReference>
<dbReference type="GO" id="GO:0008425">
    <property type="term" value="F:2-methoxy-6-polyprenyl-1,4-benzoquinol methyltransferase activity"/>
    <property type="evidence" value="ECO:0000318"/>
    <property type="project" value="GO_Central"/>
</dbReference>
<dbReference type="GO" id="GO:0043770">
    <property type="term" value="F:demethylmenaquinone methyltransferase activity"/>
    <property type="evidence" value="ECO:0007669"/>
    <property type="project" value="UniProtKB-UniRule"/>
</dbReference>
<dbReference type="GO" id="GO:0009060">
    <property type="term" value="P:aerobic respiration"/>
    <property type="evidence" value="ECO:0007669"/>
    <property type="project" value="UniProtKB-UniRule"/>
</dbReference>
<dbReference type="GO" id="GO:0009234">
    <property type="term" value="P:menaquinone biosynthetic process"/>
    <property type="evidence" value="ECO:0007669"/>
    <property type="project" value="UniProtKB-UniRule"/>
</dbReference>
<dbReference type="GO" id="GO:0032259">
    <property type="term" value="P:methylation"/>
    <property type="evidence" value="ECO:0007669"/>
    <property type="project" value="UniProtKB-KW"/>
</dbReference>
<dbReference type="GO" id="GO:0006744">
    <property type="term" value="P:ubiquinone biosynthetic process"/>
    <property type="evidence" value="ECO:0000318"/>
    <property type="project" value="GO_Central"/>
</dbReference>
<dbReference type="CDD" id="cd02440">
    <property type="entry name" value="AdoMet_MTases"/>
    <property type="match status" value="1"/>
</dbReference>
<dbReference type="Gene3D" id="3.40.50.150">
    <property type="entry name" value="Vaccinia Virus protein VP39"/>
    <property type="match status" value="1"/>
</dbReference>
<dbReference type="HAMAP" id="MF_01813">
    <property type="entry name" value="MenG_UbiE_methyltr"/>
    <property type="match status" value="1"/>
</dbReference>
<dbReference type="InterPro" id="IPR029063">
    <property type="entry name" value="SAM-dependent_MTases_sf"/>
</dbReference>
<dbReference type="InterPro" id="IPR004033">
    <property type="entry name" value="UbiE/COQ5_MeTrFase"/>
</dbReference>
<dbReference type="InterPro" id="IPR023576">
    <property type="entry name" value="UbiE/COQ5_MeTrFase_CS"/>
</dbReference>
<dbReference type="NCBIfam" id="TIGR01934">
    <property type="entry name" value="MenG_MenH_UbiE"/>
    <property type="match status" value="1"/>
</dbReference>
<dbReference type="NCBIfam" id="NF001242">
    <property type="entry name" value="PRK00216.1-3"/>
    <property type="match status" value="1"/>
</dbReference>
<dbReference type="PANTHER" id="PTHR43591:SF24">
    <property type="entry name" value="2-METHOXY-6-POLYPRENYL-1,4-BENZOQUINOL METHYLASE, MITOCHONDRIAL"/>
    <property type="match status" value="1"/>
</dbReference>
<dbReference type="PANTHER" id="PTHR43591">
    <property type="entry name" value="METHYLTRANSFERASE"/>
    <property type="match status" value="1"/>
</dbReference>
<dbReference type="Pfam" id="PF01209">
    <property type="entry name" value="Ubie_methyltran"/>
    <property type="match status" value="1"/>
</dbReference>
<dbReference type="SUPFAM" id="SSF53335">
    <property type="entry name" value="S-adenosyl-L-methionine-dependent methyltransferases"/>
    <property type="match status" value="1"/>
</dbReference>
<dbReference type="PROSITE" id="PS51608">
    <property type="entry name" value="SAM_MT_UBIE"/>
    <property type="match status" value="1"/>
</dbReference>
<dbReference type="PROSITE" id="PS01183">
    <property type="entry name" value="UBIE_1"/>
    <property type="match status" value="1"/>
</dbReference>
<dbReference type="PROSITE" id="PS01184">
    <property type="entry name" value="UBIE_2"/>
    <property type="match status" value="1"/>
</dbReference>
<name>UBIE_BRADU</name>
<gene>
    <name evidence="1" type="primary">ubiE</name>
    <name type="ordered locus">bll0761</name>
</gene>
<reference key="1">
    <citation type="journal article" date="2002" name="DNA Res.">
        <title>Complete genomic sequence of nitrogen-fixing symbiotic bacterium Bradyrhizobium japonicum USDA110.</title>
        <authorList>
            <person name="Kaneko T."/>
            <person name="Nakamura Y."/>
            <person name="Sato S."/>
            <person name="Minamisawa K."/>
            <person name="Uchiumi T."/>
            <person name="Sasamoto S."/>
            <person name="Watanabe A."/>
            <person name="Idesawa K."/>
            <person name="Iriguchi M."/>
            <person name="Kawashima K."/>
            <person name="Kohara M."/>
            <person name="Matsumoto M."/>
            <person name="Shimpo S."/>
            <person name="Tsuruoka H."/>
            <person name="Wada T."/>
            <person name="Yamada M."/>
            <person name="Tabata S."/>
        </authorList>
    </citation>
    <scope>NUCLEOTIDE SEQUENCE [LARGE SCALE GENOMIC DNA]</scope>
    <source>
        <strain>JCM 10833 / BCRC 13528 / IAM 13628 / NBRC 14792 / USDA 110</strain>
    </source>
</reference>
<reference key="2">
    <citation type="submission" date="1999-12" db="EMBL/GenBank/DDBJ databases">
        <title>BdfA, a novel sensor protein of Bradyrhizobium japonicum, is required for normal bacteroid differentiation in soybean (Glycine max).</title>
        <authorList>
            <person name="Mueller P."/>
            <person name="Unnewehr A."/>
        </authorList>
    </citation>
    <scope>NUCLEOTIDE SEQUENCE [GENOMIC DNA] OF 59-253</scope>
    <source>
        <strain>USDA 110spc4</strain>
    </source>
</reference>
<protein>
    <recommendedName>
        <fullName evidence="1">Ubiquinone/menaquinone biosynthesis C-methyltransferase UbiE</fullName>
        <ecNumber evidence="1">2.1.1.163</ecNumber>
        <ecNumber evidence="1">2.1.1.201</ecNumber>
    </recommendedName>
    <alternativeName>
        <fullName evidence="1">2-methoxy-6-polyprenyl-1,4-benzoquinol methylase</fullName>
    </alternativeName>
    <alternativeName>
        <fullName evidence="1">Demethylmenaquinone methyltransferase</fullName>
    </alternativeName>
</protein>